<dbReference type="EC" id="6.5.1.1" evidence="1"/>
<dbReference type="EMBL" id="X63438">
    <property type="protein sequence ID" value="CAA45034.1"/>
    <property type="molecule type" value="Genomic_DNA"/>
</dbReference>
<dbReference type="PIR" id="S26383">
    <property type="entry name" value="S26383"/>
</dbReference>
<dbReference type="RefSeq" id="WP_152939828.1">
    <property type="nucleotide sequence ID" value="NZ_CP045482.1"/>
</dbReference>
<dbReference type="SMR" id="Q02093"/>
<dbReference type="GeneID" id="42780226"/>
<dbReference type="GO" id="GO:0005524">
    <property type="term" value="F:ATP binding"/>
    <property type="evidence" value="ECO:0007669"/>
    <property type="project" value="UniProtKB-UniRule"/>
</dbReference>
<dbReference type="GO" id="GO:0003677">
    <property type="term" value="F:DNA binding"/>
    <property type="evidence" value="ECO:0007669"/>
    <property type="project" value="InterPro"/>
</dbReference>
<dbReference type="GO" id="GO:0003910">
    <property type="term" value="F:DNA ligase (ATP) activity"/>
    <property type="evidence" value="ECO:0007669"/>
    <property type="project" value="UniProtKB-UniRule"/>
</dbReference>
<dbReference type="GO" id="GO:0046872">
    <property type="term" value="F:metal ion binding"/>
    <property type="evidence" value="ECO:0007669"/>
    <property type="project" value="UniProtKB-KW"/>
</dbReference>
<dbReference type="GO" id="GO:0051301">
    <property type="term" value="P:cell division"/>
    <property type="evidence" value="ECO:0007669"/>
    <property type="project" value="UniProtKB-KW"/>
</dbReference>
<dbReference type="GO" id="GO:0071897">
    <property type="term" value="P:DNA biosynthetic process"/>
    <property type="evidence" value="ECO:0007669"/>
    <property type="project" value="InterPro"/>
</dbReference>
<dbReference type="GO" id="GO:0006310">
    <property type="term" value="P:DNA recombination"/>
    <property type="evidence" value="ECO:0007669"/>
    <property type="project" value="UniProtKB-UniRule"/>
</dbReference>
<dbReference type="GO" id="GO:0006281">
    <property type="term" value="P:DNA repair"/>
    <property type="evidence" value="ECO:0007669"/>
    <property type="project" value="UniProtKB-UniRule"/>
</dbReference>
<dbReference type="GO" id="GO:0006273">
    <property type="term" value="P:lagging strand elongation"/>
    <property type="evidence" value="ECO:0007669"/>
    <property type="project" value="TreeGrafter"/>
</dbReference>
<dbReference type="CDD" id="cd07901">
    <property type="entry name" value="Adenylation_DNA_ligase_Arch_LigB"/>
    <property type="match status" value="1"/>
</dbReference>
<dbReference type="CDD" id="cd07969">
    <property type="entry name" value="OBF_DNA_ligase_I"/>
    <property type="match status" value="1"/>
</dbReference>
<dbReference type="FunFam" id="1.10.3260.10:FF:000007">
    <property type="entry name" value="DNA ligase"/>
    <property type="match status" value="1"/>
</dbReference>
<dbReference type="FunFam" id="2.40.50.140:FF:000062">
    <property type="entry name" value="DNA ligase"/>
    <property type="match status" value="1"/>
</dbReference>
<dbReference type="FunFam" id="3.30.470.30:FF:000012">
    <property type="entry name" value="Probable DNA ligase"/>
    <property type="match status" value="1"/>
</dbReference>
<dbReference type="Gene3D" id="1.10.3260.10">
    <property type="entry name" value="DNA ligase, ATP-dependent, N-terminal domain"/>
    <property type="match status" value="1"/>
</dbReference>
<dbReference type="Gene3D" id="3.30.470.30">
    <property type="entry name" value="DNA ligase/mRNA capping enzyme"/>
    <property type="match status" value="1"/>
</dbReference>
<dbReference type="Gene3D" id="2.40.50.140">
    <property type="entry name" value="Nucleic acid-binding proteins"/>
    <property type="match status" value="1"/>
</dbReference>
<dbReference type="HAMAP" id="MF_00407">
    <property type="entry name" value="DNA_ligase"/>
    <property type="match status" value="1"/>
</dbReference>
<dbReference type="InterPro" id="IPR050191">
    <property type="entry name" value="ATP-dep_DNA_ligase"/>
</dbReference>
<dbReference type="InterPro" id="IPR022865">
    <property type="entry name" value="DNA_ligae_ATP-dep_bac/arc"/>
</dbReference>
<dbReference type="InterPro" id="IPR000977">
    <property type="entry name" value="DNA_ligase_ATP-dep"/>
</dbReference>
<dbReference type="InterPro" id="IPR012309">
    <property type="entry name" value="DNA_ligase_ATP-dep_C"/>
</dbReference>
<dbReference type="InterPro" id="IPR012310">
    <property type="entry name" value="DNA_ligase_ATP-dep_cent"/>
</dbReference>
<dbReference type="InterPro" id="IPR016059">
    <property type="entry name" value="DNA_ligase_ATP-dep_CS"/>
</dbReference>
<dbReference type="InterPro" id="IPR012308">
    <property type="entry name" value="DNA_ligase_ATP-dep_N"/>
</dbReference>
<dbReference type="InterPro" id="IPR036599">
    <property type="entry name" value="DNA_ligase_N_sf"/>
</dbReference>
<dbReference type="InterPro" id="IPR012340">
    <property type="entry name" value="NA-bd_OB-fold"/>
</dbReference>
<dbReference type="NCBIfam" id="TIGR00574">
    <property type="entry name" value="dnl1"/>
    <property type="match status" value="1"/>
</dbReference>
<dbReference type="PANTHER" id="PTHR45674:SF4">
    <property type="entry name" value="DNA LIGASE 1"/>
    <property type="match status" value="1"/>
</dbReference>
<dbReference type="PANTHER" id="PTHR45674">
    <property type="entry name" value="DNA LIGASE 1/3 FAMILY MEMBER"/>
    <property type="match status" value="1"/>
</dbReference>
<dbReference type="Pfam" id="PF04679">
    <property type="entry name" value="DNA_ligase_A_C"/>
    <property type="match status" value="1"/>
</dbReference>
<dbReference type="Pfam" id="PF01068">
    <property type="entry name" value="DNA_ligase_A_M"/>
    <property type="match status" value="1"/>
</dbReference>
<dbReference type="Pfam" id="PF04675">
    <property type="entry name" value="DNA_ligase_A_N"/>
    <property type="match status" value="1"/>
</dbReference>
<dbReference type="SUPFAM" id="SSF117018">
    <property type="entry name" value="ATP-dependent DNA ligase DNA-binding domain"/>
    <property type="match status" value="1"/>
</dbReference>
<dbReference type="SUPFAM" id="SSF56091">
    <property type="entry name" value="DNA ligase/mRNA capping enzyme, catalytic domain"/>
    <property type="match status" value="1"/>
</dbReference>
<dbReference type="SUPFAM" id="SSF50249">
    <property type="entry name" value="Nucleic acid-binding proteins"/>
    <property type="match status" value="1"/>
</dbReference>
<dbReference type="PROSITE" id="PS00697">
    <property type="entry name" value="DNA_LIGASE_A1"/>
    <property type="match status" value="1"/>
</dbReference>
<dbReference type="PROSITE" id="PS00333">
    <property type="entry name" value="DNA_LIGASE_A2"/>
    <property type="match status" value="1"/>
</dbReference>
<dbReference type="PROSITE" id="PS50160">
    <property type="entry name" value="DNA_LIGASE_A3"/>
    <property type="match status" value="1"/>
</dbReference>
<feature type="chain" id="PRO_0000059599" description="DNA ligase">
    <location>
        <begin position="1"/>
        <end position="600"/>
    </location>
</feature>
<feature type="active site" description="N6-AMP-lysine intermediate" evidence="1">
    <location>
        <position position="261"/>
    </location>
</feature>
<feature type="binding site" evidence="1">
    <location>
        <position position="259"/>
    </location>
    <ligand>
        <name>ATP</name>
        <dbReference type="ChEBI" id="CHEBI:30616"/>
    </ligand>
</feature>
<feature type="binding site" evidence="1">
    <location>
        <position position="266"/>
    </location>
    <ligand>
        <name>ATP</name>
        <dbReference type="ChEBI" id="CHEBI:30616"/>
    </ligand>
</feature>
<feature type="binding site" evidence="1">
    <location>
        <position position="281"/>
    </location>
    <ligand>
        <name>ATP</name>
        <dbReference type="ChEBI" id="CHEBI:30616"/>
    </ligand>
</feature>
<feature type="binding site" evidence="1">
    <location>
        <position position="311"/>
    </location>
    <ligand>
        <name>ATP</name>
        <dbReference type="ChEBI" id="CHEBI:30616"/>
    </ligand>
</feature>
<feature type="binding site" evidence="1">
    <location>
        <position position="351"/>
    </location>
    <ligand>
        <name>ATP</name>
        <dbReference type="ChEBI" id="CHEBI:30616"/>
    </ligand>
</feature>
<feature type="binding site" evidence="1">
    <location>
        <position position="428"/>
    </location>
    <ligand>
        <name>ATP</name>
        <dbReference type="ChEBI" id="CHEBI:30616"/>
    </ligand>
</feature>
<feature type="binding site" evidence="1">
    <location>
        <position position="434"/>
    </location>
    <ligand>
        <name>ATP</name>
        <dbReference type="ChEBI" id="CHEBI:30616"/>
    </ligand>
</feature>
<proteinExistence type="inferred from homology"/>
<protein>
    <recommendedName>
        <fullName evidence="1">DNA ligase</fullName>
        <ecNumber evidence="1">6.5.1.1</ecNumber>
    </recommendedName>
    <alternativeName>
        <fullName evidence="1">Polydeoxyribonucleotide synthase [ATP]</fullName>
    </alternativeName>
</protein>
<comment type="function">
    <text evidence="1">DNA ligase that seals nicks in double-stranded DNA during DNA replication, DNA recombination and DNA repair.</text>
</comment>
<comment type="catalytic activity">
    <reaction evidence="1">
        <text>ATP + (deoxyribonucleotide)n-3'-hydroxyl + 5'-phospho-(deoxyribonucleotide)m = (deoxyribonucleotide)n+m + AMP + diphosphate.</text>
        <dbReference type="EC" id="6.5.1.1"/>
    </reaction>
</comment>
<comment type="cofactor">
    <cofactor evidence="1">
        <name>Mg(2+)</name>
        <dbReference type="ChEBI" id="CHEBI:18420"/>
    </cofactor>
</comment>
<comment type="similarity">
    <text evidence="1">Belongs to the ATP-dependent DNA ligase family.</text>
</comment>
<gene>
    <name evidence="1" type="primary">lig</name>
</gene>
<keyword id="KW-0067">ATP-binding</keyword>
<keyword id="KW-0131">Cell cycle</keyword>
<keyword id="KW-0132">Cell division</keyword>
<keyword id="KW-0227">DNA damage</keyword>
<keyword id="KW-0233">DNA recombination</keyword>
<keyword id="KW-0234">DNA repair</keyword>
<keyword id="KW-0235">DNA replication</keyword>
<keyword id="KW-0436">Ligase</keyword>
<keyword id="KW-0460">Magnesium</keyword>
<keyword id="KW-0479">Metal-binding</keyword>
<keyword id="KW-0547">Nucleotide-binding</keyword>
<evidence type="ECO:0000255" key="1">
    <source>
        <dbReference type="HAMAP-Rule" id="MF_00407"/>
    </source>
</evidence>
<reference key="1">
    <citation type="journal article" date="1992" name="Nucleic Acids Res.">
        <title>Molecular characterisation of a DNA ligase gene of the extremely thermophilic archaeon Desulfurolobus ambivalens shows close phylogenetic relationship to eukaryotic ligases.</title>
        <authorList>
            <person name="Kletzin A."/>
        </authorList>
    </citation>
    <scope>NUCLEOTIDE SEQUENCE [GENOMIC DNA]</scope>
    <source>
        <strain>Lei 10 / DSM 3772 / JCM 9191</strain>
    </source>
</reference>
<sequence length="600" mass="67618">MEFKIIAEYFDRLEKISSRLQLTSLLADLFKKTDKNVIDKVVYIIQGKLWPDFLGMPELGIGEKFLIRALSIATSVSDDEIEKMYKSVGDLGQVAFDIKQKQQSASILAFLGAQKASKPLTVEKVYDDLAKVATSTGEGSRDIKIRLLAGLLKDASPLEAKYLVRFVDGRLRVGIGDATILDALAITFGGGQNFRPIVERAYNLRADLGNIAKILANGGIEQLKNIKPQPGIPIRPMLAERLSDPAEMLSKVGNIALVDYKYDGERGQIHKAGDKIFIFSRRLENITNQYPDVAEYISKYVKGNEFIVEGEIIPVDPETGEMRPFQELMHRKRKSDIHEAIKEYPVNVFLFDLMYYEGEDYTVKPLSERRKKLESIVEDNDYVHIATHIITDNVEKLKEFFYQAISEGAEGVMVKSLAPDAIYQAGSRGWLWIKFKRDYQSEMADTVDLVMVGAFHGKGRKGGKYSSFLMAAYNPDKDVFETVCKVASGFTDAELDDLQKKIAELKRDTPHPRVVSTMVPDVWLTPALVAEIIGAEITISPLHTCCKDQYAEGGLSIRFPRFIRWRPDKSPEDATTNREILEMYKSQLKKIEEKPSDQSV</sequence>
<accession>Q02093</accession>
<organism>
    <name type="scientific">Acidianus ambivalens</name>
    <name type="common">Desulfurolobus ambivalens</name>
    <dbReference type="NCBI Taxonomy" id="2283"/>
    <lineage>
        <taxon>Archaea</taxon>
        <taxon>Thermoproteota</taxon>
        <taxon>Thermoprotei</taxon>
        <taxon>Sulfolobales</taxon>
        <taxon>Sulfolobaceae</taxon>
        <taxon>Acidianus</taxon>
    </lineage>
</organism>
<name>DNLI_ACIAM</name>